<accession>P0C493</accession>
<accession>P12148</accession>
<accession>Q6QY50</accession>
<accession>Q6Z508</accession>
<dbReference type="EMBL" id="AY522329">
    <property type="protein sequence ID" value="AAS46079.1"/>
    <property type="molecule type" value="Genomic_DNA"/>
</dbReference>
<dbReference type="RefSeq" id="YP_009161399.1">
    <property type="nucleotide sequence ID" value="NC_027678.1"/>
</dbReference>
<dbReference type="RefSeq" id="YP_654239.1">
    <property type="nucleotide sequence ID" value="NC_008155.1"/>
</dbReference>
<dbReference type="SMR" id="P0C493"/>
<dbReference type="STRING" id="39946.P0C493"/>
<dbReference type="GeneID" id="4126929"/>
<dbReference type="Proteomes" id="UP000007015">
    <property type="component" value="Chloroplast"/>
</dbReference>
<dbReference type="GO" id="GO:0009507">
    <property type="term" value="C:chloroplast"/>
    <property type="evidence" value="ECO:0007669"/>
    <property type="project" value="UniProtKB-SubCell"/>
</dbReference>
<dbReference type="GO" id="GO:0009536">
    <property type="term" value="C:plastid"/>
    <property type="evidence" value="ECO:0000305"/>
    <property type="project" value="Gramene"/>
</dbReference>
<dbReference type="GO" id="GO:1990904">
    <property type="term" value="C:ribonucleoprotein complex"/>
    <property type="evidence" value="ECO:0007669"/>
    <property type="project" value="UniProtKB-KW"/>
</dbReference>
<dbReference type="GO" id="GO:0005840">
    <property type="term" value="C:ribosome"/>
    <property type="evidence" value="ECO:0007669"/>
    <property type="project" value="UniProtKB-KW"/>
</dbReference>
<dbReference type="GO" id="GO:0019843">
    <property type="term" value="F:rRNA binding"/>
    <property type="evidence" value="ECO:0007669"/>
    <property type="project" value="UniProtKB-UniRule"/>
</dbReference>
<dbReference type="GO" id="GO:0003735">
    <property type="term" value="F:structural constituent of ribosome"/>
    <property type="evidence" value="ECO:0007669"/>
    <property type="project" value="InterPro"/>
</dbReference>
<dbReference type="GO" id="GO:0006412">
    <property type="term" value="P:translation"/>
    <property type="evidence" value="ECO:0007669"/>
    <property type="project" value="UniProtKB-UniRule"/>
</dbReference>
<dbReference type="FunFam" id="3.30.1490.10:FF:000001">
    <property type="entry name" value="30S ribosomal protein S8"/>
    <property type="match status" value="1"/>
</dbReference>
<dbReference type="FunFam" id="3.30.1370.30:FF:000004">
    <property type="entry name" value="30S ribosomal protein S8, chloroplastic"/>
    <property type="match status" value="1"/>
</dbReference>
<dbReference type="Gene3D" id="3.30.1370.30">
    <property type="match status" value="1"/>
</dbReference>
<dbReference type="Gene3D" id="3.30.1490.10">
    <property type="match status" value="1"/>
</dbReference>
<dbReference type="HAMAP" id="MF_01302_B">
    <property type="entry name" value="Ribosomal_uS8_B"/>
    <property type="match status" value="1"/>
</dbReference>
<dbReference type="InterPro" id="IPR000630">
    <property type="entry name" value="Ribosomal_uS8"/>
</dbReference>
<dbReference type="InterPro" id="IPR047863">
    <property type="entry name" value="Ribosomal_uS8_CS"/>
</dbReference>
<dbReference type="InterPro" id="IPR035987">
    <property type="entry name" value="Ribosomal_uS8_sf"/>
</dbReference>
<dbReference type="NCBIfam" id="NF001109">
    <property type="entry name" value="PRK00136.1"/>
    <property type="match status" value="1"/>
</dbReference>
<dbReference type="PANTHER" id="PTHR11758">
    <property type="entry name" value="40S RIBOSOMAL PROTEIN S15A"/>
    <property type="match status" value="1"/>
</dbReference>
<dbReference type="Pfam" id="PF00410">
    <property type="entry name" value="Ribosomal_S8"/>
    <property type="match status" value="1"/>
</dbReference>
<dbReference type="SUPFAM" id="SSF56047">
    <property type="entry name" value="Ribosomal protein S8"/>
    <property type="match status" value="1"/>
</dbReference>
<dbReference type="PROSITE" id="PS00053">
    <property type="entry name" value="RIBOSOMAL_S8"/>
    <property type="match status" value="1"/>
</dbReference>
<name>RR8_ORYSI</name>
<evidence type="ECO:0000250" key="1"/>
<evidence type="ECO:0000305" key="2"/>
<protein>
    <recommendedName>
        <fullName evidence="2">Small ribosomal subunit protein uS8c</fullName>
    </recommendedName>
    <alternativeName>
        <fullName>30S ribosomal protein S8, chloroplastic</fullName>
    </alternativeName>
</protein>
<proteinExistence type="inferred from homology"/>
<gene>
    <name type="primary">rps8</name>
    <name type="ORF">9311105</name>
</gene>
<keyword id="KW-0150">Chloroplast</keyword>
<keyword id="KW-0934">Plastid</keyword>
<keyword id="KW-1185">Reference proteome</keyword>
<keyword id="KW-0687">Ribonucleoprotein</keyword>
<keyword id="KW-0689">Ribosomal protein</keyword>
<keyword id="KW-0694">RNA-binding</keyword>
<keyword id="KW-0699">rRNA-binding</keyword>
<geneLocation type="chloroplast"/>
<sequence>MGKDTIADLLTSIRNADMNKKGTVRVVSTNITENIVKILLREGFIESVRKHQESNRYFLVSTLRHQKRKTRKGIYRTRTFLKRISRPGLRIYANYQGIPKVLGGMGIAILSTSRGIMTDREARLNRIGGEVLCYIW</sequence>
<reference key="1">
    <citation type="journal article" date="2004" name="Plant Physiol.">
        <title>A comparison of rice chloroplast genomes.</title>
        <authorList>
            <person name="Tang J."/>
            <person name="Xia H."/>
            <person name="Cao M."/>
            <person name="Zhang X."/>
            <person name="Zeng W."/>
            <person name="Hu S."/>
            <person name="Tong W."/>
            <person name="Wang J."/>
            <person name="Wang J."/>
            <person name="Yu J."/>
            <person name="Yang H."/>
            <person name="Zhu L."/>
        </authorList>
    </citation>
    <scope>NUCLEOTIDE SEQUENCE [LARGE SCALE GENOMIC DNA]</scope>
    <source>
        <strain>cv. 93-11</strain>
    </source>
</reference>
<comment type="function">
    <text evidence="1">One of the primary rRNA binding proteins, it binds directly to 16S rRNA central domain where it helps coordinate assembly of the platform of the 30S subunit.</text>
</comment>
<comment type="subunit">
    <text evidence="1">Part of the 30S ribosomal subunit.</text>
</comment>
<comment type="subcellular location">
    <subcellularLocation>
        <location>Plastid</location>
        <location>Chloroplast</location>
    </subcellularLocation>
</comment>
<comment type="similarity">
    <text evidence="2">Belongs to the universal ribosomal protein uS8 family.</text>
</comment>
<organism>
    <name type="scientific">Oryza sativa subsp. indica</name>
    <name type="common">Rice</name>
    <dbReference type="NCBI Taxonomy" id="39946"/>
    <lineage>
        <taxon>Eukaryota</taxon>
        <taxon>Viridiplantae</taxon>
        <taxon>Streptophyta</taxon>
        <taxon>Embryophyta</taxon>
        <taxon>Tracheophyta</taxon>
        <taxon>Spermatophyta</taxon>
        <taxon>Magnoliopsida</taxon>
        <taxon>Liliopsida</taxon>
        <taxon>Poales</taxon>
        <taxon>Poaceae</taxon>
        <taxon>BOP clade</taxon>
        <taxon>Oryzoideae</taxon>
        <taxon>Oryzeae</taxon>
        <taxon>Oryzinae</taxon>
        <taxon>Oryza</taxon>
        <taxon>Oryza sativa</taxon>
    </lineage>
</organism>
<feature type="chain" id="PRO_0000290087" description="Small ribosomal subunit protein uS8c">
    <location>
        <begin position="1"/>
        <end position="136"/>
    </location>
</feature>